<keyword id="KW-0963">Cytoplasm</keyword>
<keyword id="KW-0520">NAD</keyword>
<keyword id="KW-0808">Transferase</keyword>
<dbReference type="EC" id="2.3.1.286" evidence="1"/>
<dbReference type="EMBL" id="AE017262">
    <property type="protein sequence ID" value="AAT05491.1"/>
    <property type="molecule type" value="Genomic_DNA"/>
</dbReference>
<dbReference type="RefSeq" id="WP_003725032.1">
    <property type="nucleotide sequence ID" value="NC_002973.6"/>
</dbReference>
<dbReference type="SMR" id="Q71W25"/>
<dbReference type="KEGG" id="lmf:LMOf2365_2726"/>
<dbReference type="HOGENOM" id="CLU_023643_3_0_9"/>
<dbReference type="GO" id="GO:0005737">
    <property type="term" value="C:cytoplasm"/>
    <property type="evidence" value="ECO:0007669"/>
    <property type="project" value="UniProtKB-SubCell"/>
</dbReference>
<dbReference type="GO" id="GO:0017136">
    <property type="term" value="F:histone deacetylase activity, NAD-dependent"/>
    <property type="evidence" value="ECO:0007669"/>
    <property type="project" value="TreeGrafter"/>
</dbReference>
<dbReference type="GO" id="GO:0070403">
    <property type="term" value="F:NAD+ binding"/>
    <property type="evidence" value="ECO:0007669"/>
    <property type="project" value="UniProtKB-UniRule"/>
</dbReference>
<dbReference type="CDD" id="cd01411">
    <property type="entry name" value="SIR2H"/>
    <property type="match status" value="1"/>
</dbReference>
<dbReference type="Gene3D" id="3.30.1600.10">
    <property type="entry name" value="SIR2/SIRT2 'Small Domain"/>
    <property type="match status" value="1"/>
</dbReference>
<dbReference type="Gene3D" id="3.40.50.1220">
    <property type="entry name" value="TPP-binding domain"/>
    <property type="match status" value="1"/>
</dbReference>
<dbReference type="HAMAP" id="MF_01968">
    <property type="entry name" value="Sirtuin_ClassU"/>
    <property type="match status" value="1"/>
</dbReference>
<dbReference type="InterPro" id="IPR029035">
    <property type="entry name" value="DHS-like_NAD/FAD-binding_dom"/>
</dbReference>
<dbReference type="InterPro" id="IPR050134">
    <property type="entry name" value="NAD-dep_sirtuin_deacylases"/>
</dbReference>
<dbReference type="InterPro" id="IPR003000">
    <property type="entry name" value="Sirtuin"/>
</dbReference>
<dbReference type="InterPro" id="IPR026591">
    <property type="entry name" value="Sirtuin_cat_small_dom_sf"/>
</dbReference>
<dbReference type="InterPro" id="IPR028628">
    <property type="entry name" value="Sirtuin_class_U"/>
</dbReference>
<dbReference type="InterPro" id="IPR026590">
    <property type="entry name" value="Ssirtuin_cat_dom"/>
</dbReference>
<dbReference type="NCBIfam" id="NF001752">
    <property type="entry name" value="PRK00481.1-1"/>
    <property type="match status" value="1"/>
</dbReference>
<dbReference type="PANTHER" id="PTHR11085:SF4">
    <property type="entry name" value="NAD-DEPENDENT PROTEIN DEACYLASE"/>
    <property type="match status" value="1"/>
</dbReference>
<dbReference type="PANTHER" id="PTHR11085">
    <property type="entry name" value="NAD-DEPENDENT PROTEIN DEACYLASE SIRTUIN-5, MITOCHONDRIAL-RELATED"/>
    <property type="match status" value="1"/>
</dbReference>
<dbReference type="Pfam" id="PF02146">
    <property type="entry name" value="SIR2"/>
    <property type="match status" value="1"/>
</dbReference>
<dbReference type="SUPFAM" id="SSF52467">
    <property type="entry name" value="DHS-like NAD/FAD-binding domain"/>
    <property type="match status" value="1"/>
</dbReference>
<dbReference type="PROSITE" id="PS50305">
    <property type="entry name" value="SIRTUIN"/>
    <property type="match status" value="1"/>
</dbReference>
<reference key="1">
    <citation type="journal article" date="2004" name="Nucleic Acids Res.">
        <title>Whole genome comparisons of serotype 4b and 1/2a strains of the food-borne pathogen Listeria monocytogenes reveal new insights into the core genome components of this species.</title>
        <authorList>
            <person name="Nelson K.E."/>
            <person name="Fouts D.E."/>
            <person name="Mongodin E.F."/>
            <person name="Ravel J."/>
            <person name="DeBoy R.T."/>
            <person name="Kolonay J.F."/>
            <person name="Rasko D.A."/>
            <person name="Angiuoli S.V."/>
            <person name="Gill S.R."/>
            <person name="Paulsen I.T."/>
            <person name="Peterson J.D."/>
            <person name="White O."/>
            <person name="Nelson W.C."/>
            <person name="Nierman W.C."/>
            <person name="Beanan M.J."/>
            <person name="Brinkac L.M."/>
            <person name="Daugherty S.C."/>
            <person name="Dodson R.J."/>
            <person name="Durkin A.S."/>
            <person name="Madupu R."/>
            <person name="Haft D.H."/>
            <person name="Selengut J."/>
            <person name="Van Aken S.E."/>
            <person name="Khouri H.M."/>
            <person name="Fedorova N."/>
            <person name="Forberger H.A."/>
            <person name="Tran B."/>
            <person name="Kathariou S."/>
            <person name="Wonderling L.D."/>
            <person name="Uhlich G.A."/>
            <person name="Bayles D.O."/>
            <person name="Luchansky J.B."/>
            <person name="Fraser C.M."/>
        </authorList>
    </citation>
    <scope>NUCLEOTIDE SEQUENCE [LARGE SCALE GENOMIC DNA]</scope>
    <source>
        <strain>F2365</strain>
    </source>
</reference>
<gene>
    <name evidence="1" type="primary">cobB</name>
    <name type="ordered locus">LMOf2365_2726</name>
</gene>
<protein>
    <recommendedName>
        <fullName evidence="1">NAD-dependent protein deacetylase</fullName>
        <ecNumber evidence="1">2.3.1.286</ecNumber>
    </recommendedName>
    <alternativeName>
        <fullName evidence="1">Regulatory protein SIR2 homolog</fullName>
    </alternativeName>
</protein>
<accession>Q71W25</accession>
<feature type="chain" id="PRO_0000110326" description="NAD-dependent protein deacetylase">
    <location>
        <begin position="1"/>
        <end position="229"/>
    </location>
</feature>
<feature type="domain" description="Deacetylase sirtuin-type" evidence="2">
    <location>
        <begin position="1"/>
        <end position="229"/>
    </location>
</feature>
<feature type="active site" description="Proton acceptor" evidence="1">
    <location>
        <position position="114"/>
    </location>
</feature>
<feature type="binding site" evidence="1">
    <location>
        <position position="20"/>
    </location>
    <ligand>
        <name>NAD(+)</name>
        <dbReference type="ChEBI" id="CHEBI:57540"/>
    </ligand>
</feature>
<feature type="binding site" evidence="1">
    <location>
        <position position="32"/>
    </location>
    <ligand>
        <name>NAD(+)</name>
        <dbReference type="ChEBI" id="CHEBI:57540"/>
    </ligand>
</feature>
<feature type="binding site" evidence="1">
    <location>
        <position position="96"/>
    </location>
    <ligand>
        <name>NAD(+)</name>
        <dbReference type="ChEBI" id="CHEBI:57540"/>
    </ligand>
</feature>
<feature type="binding site" evidence="1">
    <location>
        <position position="98"/>
    </location>
    <ligand>
        <name>NAD(+)</name>
        <dbReference type="ChEBI" id="CHEBI:57540"/>
    </ligand>
</feature>
<feature type="binding site" evidence="1">
    <location>
        <position position="98"/>
    </location>
    <ligand>
        <name>nicotinamide</name>
        <dbReference type="ChEBI" id="CHEBI:17154"/>
    </ligand>
</feature>
<feature type="binding site" evidence="1">
    <location>
        <position position="99"/>
    </location>
    <ligand>
        <name>NAD(+)</name>
        <dbReference type="ChEBI" id="CHEBI:57540"/>
    </ligand>
</feature>
<feature type="binding site" evidence="1">
    <location>
        <position position="99"/>
    </location>
    <ligand>
        <name>nicotinamide</name>
        <dbReference type="ChEBI" id="CHEBI:17154"/>
    </ligand>
</feature>
<feature type="binding site" evidence="1">
    <location>
        <position position="114"/>
    </location>
    <ligand>
        <name>NAD(+)</name>
        <dbReference type="ChEBI" id="CHEBI:57540"/>
    </ligand>
</feature>
<feature type="binding site" evidence="1">
    <location>
        <position position="181"/>
    </location>
    <ligand>
        <name>NAD(+)</name>
        <dbReference type="ChEBI" id="CHEBI:57540"/>
    </ligand>
</feature>
<feature type="binding site" evidence="1">
    <location>
        <position position="182"/>
    </location>
    <ligand>
        <name>NAD(+)</name>
        <dbReference type="ChEBI" id="CHEBI:57540"/>
    </ligand>
</feature>
<feature type="binding site" evidence="1">
    <location>
        <position position="205"/>
    </location>
    <ligand>
        <name>NAD(+)</name>
        <dbReference type="ChEBI" id="CHEBI:57540"/>
    </ligand>
</feature>
<feature type="binding site" evidence="1">
    <location>
        <position position="223"/>
    </location>
    <ligand>
        <name>NAD(+)</name>
        <dbReference type="ChEBI" id="CHEBI:57540"/>
    </ligand>
</feature>
<organism>
    <name type="scientific">Listeria monocytogenes serotype 4b (strain F2365)</name>
    <dbReference type="NCBI Taxonomy" id="265669"/>
    <lineage>
        <taxon>Bacteria</taxon>
        <taxon>Bacillati</taxon>
        <taxon>Bacillota</taxon>
        <taxon>Bacilli</taxon>
        <taxon>Bacillales</taxon>
        <taxon>Listeriaceae</taxon>
        <taxon>Listeria</taxon>
    </lineage>
</organism>
<evidence type="ECO:0000255" key="1">
    <source>
        <dbReference type="HAMAP-Rule" id="MF_01968"/>
    </source>
</evidence>
<evidence type="ECO:0000255" key="2">
    <source>
        <dbReference type="PROSITE-ProRule" id="PRU00236"/>
    </source>
</evidence>
<proteinExistence type="inferred from homology"/>
<name>NPD_LISMF</name>
<comment type="function">
    <text evidence="1">NAD-dependent protein deacetylase which modulates the activities of several enzymes which are inactive in their acetylated form.</text>
</comment>
<comment type="catalytic activity">
    <reaction evidence="1">
        <text>N(6)-acetyl-L-lysyl-[protein] + NAD(+) + H2O = 2''-O-acetyl-ADP-D-ribose + nicotinamide + L-lysyl-[protein]</text>
        <dbReference type="Rhea" id="RHEA:43636"/>
        <dbReference type="Rhea" id="RHEA-COMP:9752"/>
        <dbReference type="Rhea" id="RHEA-COMP:10731"/>
        <dbReference type="ChEBI" id="CHEBI:15377"/>
        <dbReference type="ChEBI" id="CHEBI:17154"/>
        <dbReference type="ChEBI" id="CHEBI:29969"/>
        <dbReference type="ChEBI" id="CHEBI:57540"/>
        <dbReference type="ChEBI" id="CHEBI:61930"/>
        <dbReference type="ChEBI" id="CHEBI:83767"/>
        <dbReference type="EC" id="2.3.1.286"/>
    </reaction>
</comment>
<comment type="subcellular location">
    <subcellularLocation>
        <location evidence="1">Cytoplasm</location>
    </subcellularLocation>
</comment>
<comment type="similarity">
    <text evidence="1">Belongs to the sirtuin family. Class U subfamily.</text>
</comment>
<sequence length="229" mass="25559">MNKLNEALKKAEHIVFLTGAGVSVPSGIPDYRSKNGLYAGMSSPEYMLSHTCLVREPEKFYQFVTENMYYPDAEPNAIHTKMAEIEAEKDVTIITQNIDGLHEKAGSKKVVNFHGSLYHCYCQKCGMSVTAEEYLKSDIHSGCGGVIRPDVVLYEEAIPESAIDQSLAAIRQADLIVIVGTSFRVSPFCNLTDYRNKKARIFAVNKEQISLPYPFEMMESDAVKVFAEI</sequence>